<feature type="initiator methionine" description="Removed" evidence="12">
    <location>
        <position position="1"/>
    </location>
</feature>
<feature type="chain" id="PRO_0000086524" description="Phosphoinositide 3-kinase regulatory subunit 4">
    <location>
        <begin position="2"/>
        <end position="1358"/>
    </location>
</feature>
<feature type="domain" description="Protein kinase" evidence="2">
    <location>
        <begin position="26"/>
        <end position="324"/>
    </location>
</feature>
<feature type="repeat" description="HEAT 1">
    <location>
        <begin position="413"/>
        <end position="450"/>
    </location>
</feature>
<feature type="repeat" description="HEAT 2">
    <location>
        <begin position="458"/>
        <end position="495"/>
    </location>
</feature>
<feature type="repeat" description="HEAT 3">
    <location>
        <begin position="572"/>
        <end position="610"/>
    </location>
</feature>
<feature type="repeat" description="WD 1">
    <location>
        <begin position="991"/>
        <end position="1030"/>
    </location>
</feature>
<feature type="repeat" description="WD 2">
    <location>
        <begin position="1040"/>
        <end position="1079"/>
    </location>
</feature>
<feature type="repeat" description="WD 3">
    <location>
        <begin position="1093"/>
        <end position="1134"/>
    </location>
</feature>
<feature type="repeat" description="WD 4">
    <location>
        <begin position="1139"/>
        <end position="1178"/>
    </location>
</feature>
<feature type="repeat" description="WD 5">
    <location>
        <begin position="1182"/>
        <end position="1223"/>
    </location>
</feature>
<feature type="repeat" description="WD 6">
    <location>
        <begin position="1237"/>
        <end position="1278"/>
    </location>
</feature>
<feature type="repeat" description="WD 7">
    <location>
        <begin position="1327"/>
        <end position="1358"/>
    </location>
</feature>
<feature type="region of interest" description="Disordered" evidence="4">
    <location>
        <begin position="875"/>
        <end position="898"/>
    </location>
</feature>
<feature type="region of interest" description="Disordered" evidence="4">
    <location>
        <begin position="1307"/>
        <end position="1326"/>
    </location>
</feature>
<feature type="compositionally biased region" description="Basic and acidic residues" evidence="4">
    <location>
        <begin position="1315"/>
        <end position="1326"/>
    </location>
</feature>
<feature type="active site" description="Proton acceptor" evidence="2 3">
    <location>
        <position position="148"/>
    </location>
</feature>
<feature type="binding site" evidence="2">
    <location>
        <begin position="32"/>
        <end position="40"/>
    </location>
    <ligand>
        <name>ATP</name>
        <dbReference type="ChEBI" id="CHEBI:30616"/>
    </ligand>
</feature>
<feature type="binding site" evidence="2">
    <location>
        <position position="53"/>
    </location>
    <ligand>
        <name>ATP</name>
        <dbReference type="ChEBI" id="CHEBI:30616"/>
    </ligand>
</feature>
<feature type="modified residue" description="Phosphoserine" evidence="18">
    <location>
        <position position="808"/>
    </location>
</feature>
<feature type="modified residue" description="Phosphoserine" evidence="19">
    <location>
        <position position="813"/>
    </location>
</feature>
<feature type="modified residue" description="Phosphoserine" evidence="18">
    <location>
        <position position="853"/>
    </location>
</feature>
<feature type="modified residue" description="Phosphoserine" evidence="18">
    <location>
        <position position="865"/>
    </location>
</feature>
<feature type="modified residue" description="Phosphothreonine" evidence="17">
    <location>
        <position position="1316"/>
    </location>
</feature>
<feature type="lipid moiety-binding region" description="N-myristoyl glycine" evidence="12 14">
    <location>
        <position position="2"/>
    </location>
</feature>
<feature type="sequence variant" id="VAR_040997" description="In dbSNP:rs55951445." evidence="7">
    <original>F</original>
    <variation>L</variation>
    <location>
        <position position="273"/>
    </location>
</feature>
<feature type="sequence variant" id="VAR_040998" description="In dbSNP:rs56295394." evidence="7">
    <original>R</original>
    <variation>H</variation>
    <location>
        <position position="342"/>
    </location>
</feature>
<feature type="sequence variant" id="VAR_040999" description="In dbSNP:rs34797184." evidence="7">
    <original>R</original>
    <variation>W</variation>
    <location>
        <position position="347"/>
    </location>
</feature>
<feature type="sequence variant" id="VAR_041000" description="In dbSNP:rs34663155." evidence="7">
    <original>T</original>
    <variation>I</variation>
    <location>
        <position position="388"/>
    </location>
</feature>
<feature type="sequence variant" id="VAR_041001" description="In dbSNP:rs34633532." evidence="7">
    <original>D</original>
    <variation>N</variation>
    <location>
        <position position="393"/>
    </location>
</feature>
<feature type="sequence variant" id="VAR_041002" description="In dbSNP:rs56369596." evidence="7">
    <original>L</original>
    <variation>V</variation>
    <location>
        <position position="699"/>
    </location>
</feature>
<feature type="sequence variant" id="VAR_035632" description="In a breast cancer sample; somatic mutation; dbSNP:rs181132426." evidence="6">
    <original>R</original>
    <variation>Q</variation>
    <location>
        <position position="936"/>
    </location>
</feature>
<feature type="sequence variant" id="VAR_041003" description="In dbSNP:rs56160735." evidence="7">
    <original>G</original>
    <variation>V</variation>
    <location>
        <position position="1043"/>
    </location>
</feature>
<feature type="sequence conflict" description="In Ref. 1; AA sequence." evidence="16" ref="1">
    <original>RI</original>
    <variation>EK</variation>
    <location>
        <begin position="342"/>
        <end position="343"/>
    </location>
</feature>
<feature type="sequence conflict" description="In Ref. 1; AA sequence." evidence="16" ref="1">
    <original>KQ</original>
    <variation>FK</variation>
    <location>
        <begin position="553"/>
        <end position="554"/>
    </location>
</feature>
<name>PI3R4_HUMAN</name>
<protein>
    <recommendedName>
        <fullName>Phosphoinositide 3-kinase regulatory subunit 4</fullName>
        <shortName>PI3-kinase regulatory subunit 4</shortName>
        <ecNumber>2.7.11.1</ecNumber>
    </recommendedName>
    <alternativeName>
        <fullName>PI3-kinase p150 subunit</fullName>
    </alternativeName>
    <alternativeName>
        <fullName>Phosphoinositide 3-kinase adaptor protein</fullName>
    </alternativeName>
</protein>
<dbReference type="EC" id="2.7.11.1"/>
<dbReference type="EMBL" id="Y08991">
    <property type="protein sequence ID" value="CAA70176.1"/>
    <property type="molecule type" value="mRNA"/>
</dbReference>
<dbReference type="EMBL" id="BC110318">
    <property type="protein sequence ID" value="AAI10319.1"/>
    <property type="molecule type" value="mRNA"/>
</dbReference>
<dbReference type="EMBL" id="BC127106">
    <property type="protein sequence ID" value="AAI27107.1"/>
    <property type="molecule type" value="mRNA"/>
</dbReference>
<dbReference type="CCDS" id="CCDS3067.1"/>
<dbReference type="RefSeq" id="NP_055417.1">
    <property type="nucleotide sequence ID" value="NM_014602.3"/>
</dbReference>
<dbReference type="PDB" id="7BL1">
    <property type="method" value="EM"/>
    <property type="resolution" value="9.80 A"/>
    <property type="chains" value="CCC=1-1358"/>
</dbReference>
<dbReference type="PDB" id="8SOR">
    <property type="method" value="EM"/>
    <property type="resolution" value="3.96 A"/>
    <property type="chains" value="A=1-1358"/>
</dbReference>
<dbReference type="PDB" id="9C82">
    <property type="method" value="EM"/>
    <property type="resolution" value="6.84 A"/>
    <property type="chains" value="A=1-1358"/>
</dbReference>
<dbReference type="PDB" id="9MHF">
    <property type="method" value="EM"/>
    <property type="resolution" value="2.73 A"/>
    <property type="chains" value="A=1-1358"/>
</dbReference>
<dbReference type="PDB" id="9MHG">
    <property type="method" value="EM"/>
    <property type="resolution" value="3.20 A"/>
    <property type="chains" value="A=1-1358"/>
</dbReference>
<dbReference type="PDB" id="9MHH">
    <property type="method" value="EM"/>
    <property type="resolution" value="4.50 A"/>
    <property type="chains" value="A=1-1358"/>
</dbReference>
<dbReference type="PDBsum" id="7BL1"/>
<dbReference type="PDBsum" id="8SOR"/>
<dbReference type="PDBsum" id="9C82"/>
<dbReference type="PDBsum" id="9MHF"/>
<dbReference type="PDBsum" id="9MHG"/>
<dbReference type="PDBsum" id="9MHH"/>
<dbReference type="EMDB" id="EMD-12214"/>
<dbReference type="EMDB" id="EMD-2846"/>
<dbReference type="EMDB" id="EMD-40669"/>
<dbReference type="EMDB" id="EMD-40738"/>
<dbReference type="EMDB" id="EMD-45297"/>
<dbReference type="EMDB" id="EMD-48276"/>
<dbReference type="EMDB" id="EMD-48277"/>
<dbReference type="EMDB" id="EMD-48278"/>
<dbReference type="SMR" id="Q99570"/>
<dbReference type="BioGRID" id="119059">
    <property type="interactions" value="120"/>
</dbReference>
<dbReference type="ComplexPortal" id="CPX-73">
    <property type="entry name" value="Phosphatidylinositol 3-kinase complex, class III, ATG14 variant"/>
</dbReference>
<dbReference type="ComplexPortal" id="CPX-74">
    <property type="entry name" value="Phosphatidylinositol 3-kinase complex, class III, UVRAG variant"/>
</dbReference>
<dbReference type="CORUM" id="Q99570"/>
<dbReference type="DIP" id="DIP-42310N"/>
<dbReference type="ELM" id="Q99570"/>
<dbReference type="FunCoup" id="Q99570">
    <property type="interactions" value="3008"/>
</dbReference>
<dbReference type="IntAct" id="Q99570">
    <property type="interactions" value="138"/>
</dbReference>
<dbReference type="MINT" id="Q99570"/>
<dbReference type="STRING" id="9606.ENSP00000349205"/>
<dbReference type="BindingDB" id="Q99570"/>
<dbReference type="ChEMBL" id="CHEMBL2189144"/>
<dbReference type="GlyGen" id="Q99570">
    <property type="glycosylation" value="4 sites, 1 O-linked glycan (4 sites)"/>
</dbReference>
<dbReference type="iPTMnet" id="Q99570"/>
<dbReference type="PhosphoSitePlus" id="Q99570"/>
<dbReference type="BioMuta" id="PIK3R4"/>
<dbReference type="DMDM" id="74762700"/>
<dbReference type="jPOST" id="Q99570"/>
<dbReference type="MassIVE" id="Q99570"/>
<dbReference type="PaxDb" id="9606-ENSP00000349205"/>
<dbReference type="PeptideAtlas" id="Q99570"/>
<dbReference type="ProteomicsDB" id="78330"/>
<dbReference type="Pumba" id="Q99570"/>
<dbReference type="Antibodypedia" id="33331">
    <property type="antibodies" value="477 antibodies from 34 providers"/>
</dbReference>
<dbReference type="DNASU" id="30849"/>
<dbReference type="Ensembl" id="ENST00000356763.8">
    <property type="protein sequence ID" value="ENSP00000349205.3"/>
    <property type="gene ID" value="ENSG00000196455.8"/>
</dbReference>
<dbReference type="GeneID" id="30849"/>
<dbReference type="KEGG" id="hsa:30849"/>
<dbReference type="MANE-Select" id="ENST00000356763.8">
    <property type="protein sequence ID" value="ENSP00000349205.3"/>
    <property type="RefSeq nucleotide sequence ID" value="NM_014602.3"/>
    <property type="RefSeq protein sequence ID" value="NP_055417.1"/>
</dbReference>
<dbReference type="UCSC" id="uc003enj.4">
    <property type="organism name" value="human"/>
</dbReference>
<dbReference type="AGR" id="HGNC:8982"/>
<dbReference type="CTD" id="30849"/>
<dbReference type="DisGeNET" id="30849"/>
<dbReference type="GeneCards" id="PIK3R4"/>
<dbReference type="HGNC" id="HGNC:8982">
    <property type="gene designation" value="PIK3R4"/>
</dbReference>
<dbReference type="HPA" id="ENSG00000196455">
    <property type="expression patterns" value="Low tissue specificity"/>
</dbReference>
<dbReference type="MIM" id="602610">
    <property type="type" value="gene"/>
</dbReference>
<dbReference type="neXtProt" id="NX_Q99570"/>
<dbReference type="OpenTargets" id="ENSG00000196455"/>
<dbReference type="PharmGKB" id="PA33315"/>
<dbReference type="VEuPathDB" id="HostDB:ENSG00000196455"/>
<dbReference type="eggNOG" id="KOG1240">
    <property type="taxonomic scope" value="Eukaryota"/>
</dbReference>
<dbReference type="GeneTree" id="ENSGT00390000016225"/>
<dbReference type="HOGENOM" id="CLU_001696_0_0_1"/>
<dbReference type="InParanoid" id="Q99570"/>
<dbReference type="OMA" id="ATNTCRI"/>
<dbReference type="OrthoDB" id="242910at2759"/>
<dbReference type="PAN-GO" id="Q99570">
    <property type="GO annotations" value="10 GO annotations based on evolutionary models"/>
</dbReference>
<dbReference type="PhylomeDB" id="Q99570"/>
<dbReference type="TreeFam" id="TF102034"/>
<dbReference type="BioCyc" id="MetaCyc:HS03788-MONOMER"/>
<dbReference type="PathwayCommons" id="Q99570"/>
<dbReference type="Reactome" id="R-HSA-109704">
    <property type="pathway name" value="PI3K Cascade"/>
</dbReference>
<dbReference type="Reactome" id="R-HSA-1632852">
    <property type="pathway name" value="Macroautophagy"/>
</dbReference>
<dbReference type="Reactome" id="R-HSA-1660514">
    <property type="pathway name" value="Synthesis of PIPs at the Golgi membrane"/>
</dbReference>
<dbReference type="Reactome" id="R-HSA-1660516">
    <property type="pathway name" value="Synthesis of PIPs at the early endosome membrane"/>
</dbReference>
<dbReference type="Reactome" id="R-HSA-1660517">
    <property type="pathway name" value="Synthesis of PIPs at the late endosome membrane"/>
</dbReference>
<dbReference type="Reactome" id="R-HSA-168138">
    <property type="pathway name" value="Toll Like Receptor 9 (TLR9) Cascade"/>
</dbReference>
<dbReference type="Reactome" id="R-HSA-5668599">
    <property type="pathway name" value="RHO GTPases Activate NADPH Oxidases"/>
</dbReference>
<dbReference type="Reactome" id="R-HSA-9679504">
    <property type="pathway name" value="Translation of Replicase and Assembly of the Replication Transcription Complex"/>
</dbReference>
<dbReference type="Reactome" id="R-HSA-9694676">
    <property type="pathway name" value="Translation of Replicase and Assembly of the Replication Transcription Complex"/>
</dbReference>
<dbReference type="Reactome" id="R-HSA-9705671">
    <property type="pathway name" value="SARS-CoV-2 activates/modulates innate and adaptive immune responses"/>
</dbReference>
<dbReference type="Reactome" id="R-HSA-983170">
    <property type="pathway name" value="Antigen Presentation: Folding, assembly and peptide loading of class I MHC"/>
</dbReference>
<dbReference type="SignaLink" id="Q99570"/>
<dbReference type="SIGNOR" id="Q99570"/>
<dbReference type="BioGRID-ORCS" id="30849">
    <property type="hits" value="374 hits in 1212 CRISPR screens"/>
</dbReference>
<dbReference type="ChiTaRS" id="PIK3R4">
    <property type="organism name" value="human"/>
</dbReference>
<dbReference type="GeneWiki" id="PIK3R4"/>
<dbReference type="GenomeRNAi" id="30849"/>
<dbReference type="Pharos" id="Q99570">
    <property type="development level" value="Tbio"/>
</dbReference>
<dbReference type="PRO" id="PR:Q99570"/>
<dbReference type="Proteomes" id="UP000005640">
    <property type="component" value="Chromosome 3"/>
</dbReference>
<dbReference type="RNAct" id="Q99570">
    <property type="molecule type" value="protein"/>
</dbReference>
<dbReference type="Bgee" id="ENSG00000196455">
    <property type="expression patterns" value="Expressed in right lobe of liver and 198 other cell types or tissues"/>
</dbReference>
<dbReference type="ExpressionAtlas" id="Q99570">
    <property type="expression patterns" value="baseline and differential"/>
</dbReference>
<dbReference type="GO" id="GO:0005776">
    <property type="term" value="C:autophagosome"/>
    <property type="evidence" value="ECO:0007669"/>
    <property type="project" value="UniProtKB-SubCell"/>
</dbReference>
<dbReference type="GO" id="GO:0005930">
    <property type="term" value="C:axoneme"/>
    <property type="evidence" value="ECO:0000250"/>
    <property type="project" value="UniProtKB"/>
</dbReference>
<dbReference type="GO" id="GO:0036064">
    <property type="term" value="C:ciliary basal body"/>
    <property type="evidence" value="ECO:0000314"/>
    <property type="project" value="HPA"/>
</dbReference>
<dbReference type="GO" id="GO:0005929">
    <property type="term" value="C:cilium"/>
    <property type="evidence" value="ECO:0000314"/>
    <property type="project" value="HPA"/>
</dbReference>
<dbReference type="GO" id="GO:0005829">
    <property type="term" value="C:cytosol"/>
    <property type="evidence" value="ECO:0000304"/>
    <property type="project" value="Reactome"/>
</dbReference>
<dbReference type="GO" id="GO:0045171">
    <property type="term" value="C:intercellular bridge"/>
    <property type="evidence" value="ECO:0000314"/>
    <property type="project" value="HPA"/>
</dbReference>
<dbReference type="GO" id="GO:0043231">
    <property type="term" value="C:intracellular membrane-bounded organelle"/>
    <property type="evidence" value="ECO:0000314"/>
    <property type="project" value="HPA"/>
</dbReference>
<dbReference type="GO" id="GO:0005770">
    <property type="term" value="C:late endosome"/>
    <property type="evidence" value="ECO:0000314"/>
    <property type="project" value="UniProtKB"/>
</dbReference>
<dbReference type="GO" id="GO:0016020">
    <property type="term" value="C:membrane"/>
    <property type="evidence" value="ECO:0007005"/>
    <property type="project" value="UniProtKB"/>
</dbReference>
<dbReference type="GO" id="GO:0015630">
    <property type="term" value="C:microtubule cytoskeleton"/>
    <property type="evidence" value="ECO:0000314"/>
    <property type="project" value="HPA"/>
</dbReference>
<dbReference type="GO" id="GO:0071561">
    <property type="term" value="C:nucleus-vacuole junction"/>
    <property type="evidence" value="ECO:0000318"/>
    <property type="project" value="GO_Central"/>
</dbReference>
<dbReference type="GO" id="GO:0030670">
    <property type="term" value="C:phagocytic vesicle membrane"/>
    <property type="evidence" value="ECO:0000304"/>
    <property type="project" value="Reactome"/>
</dbReference>
<dbReference type="GO" id="GO:0035032">
    <property type="term" value="C:phosphatidylinositol 3-kinase complex, class III"/>
    <property type="evidence" value="ECO:0000353"/>
    <property type="project" value="ComplexPortal"/>
</dbReference>
<dbReference type="GO" id="GO:0034271">
    <property type="term" value="C:phosphatidylinositol 3-kinase complex, class III, type I"/>
    <property type="evidence" value="ECO:0000318"/>
    <property type="project" value="GO_Central"/>
</dbReference>
<dbReference type="GO" id="GO:0034272">
    <property type="term" value="C:phosphatidylinositol 3-kinase complex, class III, type II"/>
    <property type="evidence" value="ECO:0000318"/>
    <property type="project" value="GO_Central"/>
</dbReference>
<dbReference type="GO" id="GO:0005524">
    <property type="term" value="F:ATP binding"/>
    <property type="evidence" value="ECO:0007669"/>
    <property type="project" value="UniProtKB-KW"/>
</dbReference>
<dbReference type="GO" id="GO:0004672">
    <property type="term" value="F:protein kinase activity"/>
    <property type="evidence" value="ECO:0000303"/>
    <property type="project" value="UniProtKB"/>
</dbReference>
<dbReference type="GO" id="GO:0106310">
    <property type="term" value="F:protein serine kinase activity"/>
    <property type="evidence" value="ECO:0007669"/>
    <property type="project" value="RHEA"/>
</dbReference>
<dbReference type="GO" id="GO:0004674">
    <property type="term" value="F:protein serine/threonine kinase activity"/>
    <property type="evidence" value="ECO:0000318"/>
    <property type="project" value="GO_Central"/>
</dbReference>
<dbReference type="GO" id="GO:0097352">
    <property type="term" value="P:autophagosome maturation"/>
    <property type="evidence" value="ECO:0000314"/>
    <property type="project" value="ComplexPortal"/>
</dbReference>
<dbReference type="GO" id="GO:0042149">
    <property type="term" value="P:cellular response to glucose starvation"/>
    <property type="evidence" value="ECO:0000250"/>
    <property type="project" value="UniProtKB"/>
</dbReference>
<dbReference type="GO" id="GO:0045022">
    <property type="term" value="P:early endosome to late endosome transport"/>
    <property type="evidence" value="ECO:0000314"/>
    <property type="project" value="ComplexPortal"/>
</dbReference>
<dbReference type="GO" id="GO:0045324">
    <property type="term" value="P:late endosome to vacuole transport"/>
    <property type="evidence" value="ECO:0000318"/>
    <property type="project" value="GO_Central"/>
</dbReference>
<dbReference type="GO" id="GO:0000425">
    <property type="term" value="P:pexophagy"/>
    <property type="evidence" value="ECO:0000318"/>
    <property type="project" value="GO_Central"/>
</dbReference>
<dbReference type="GO" id="GO:0043491">
    <property type="term" value="P:phosphatidylinositol 3-kinase/protein kinase B signal transduction"/>
    <property type="evidence" value="ECO:0000314"/>
    <property type="project" value="UniProtKB"/>
</dbReference>
<dbReference type="GO" id="GO:0036092">
    <property type="term" value="P:phosphatidylinositol-3-phosphate biosynthetic process"/>
    <property type="evidence" value="ECO:0000314"/>
    <property type="project" value="ComplexPortal"/>
</dbReference>
<dbReference type="GO" id="GO:0006468">
    <property type="term" value="P:protein phosphorylation"/>
    <property type="evidence" value="ECO:0000303"/>
    <property type="project" value="UniProtKB"/>
</dbReference>
<dbReference type="GO" id="GO:0006622">
    <property type="term" value="P:protein targeting to lysosome"/>
    <property type="evidence" value="ECO:0000303"/>
    <property type="project" value="ComplexPortal"/>
</dbReference>
<dbReference type="GO" id="GO:0006623">
    <property type="term" value="P:protein targeting to vacuole"/>
    <property type="evidence" value="ECO:0000318"/>
    <property type="project" value="GO_Central"/>
</dbReference>
<dbReference type="GO" id="GO:0032801">
    <property type="term" value="P:receptor catabolic process"/>
    <property type="evidence" value="ECO:0000315"/>
    <property type="project" value="UniProtKB"/>
</dbReference>
<dbReference type="GO" id="GO:0010506">
    <property type="term" value="P:regulation of autophagy"/>
    <property type="evidence" value="ECO:0000314"/>
    <property type="project" value="ComplexPortal"/>
</dbReference>
<dbReference type="GO" id="GO:0032465">
    <property type="term" value="P:regulation of cytokinesis"/>
    <property type="evidence" value="ECO:0000315"/>
    <property type="project" value="UniProtKB"/>
</dbReference>
<dbReference type="GO" id="GO:0016241">
    <property type="term" value="P:regulation of macroautophagy"/>
    <property type="evidence" value="ECO:0000314"/>
    <property type="project" value="ComplexPortal"/>
</dbReference>
<dbReference type="CDD" id="cd13980">
    <property type="entry name" value="STKc_Vps15"/>
    <property type="match status" value="1"/>
</dbReference>
<dbReference type="FunFam" id="1.25.10.10:FF:000154">
    <property type="entry name" value="Phosphoinositide 3-kinase regulatory subunit 4"/>
    <property type="match status" value="1"/>
</dbReference>
<dbReference type="FunFam" id="1.10.510.10:FF:000305">
    <property type="entry name" value="phosphoinositide 3-kinase regulatory subunit 4"/>
    <property type="match status" value="1"/>
</dbReference>
<dbReference type="FunFam" id="1.25.10.10:FF:000100">
    <property type="entry name" value="phosphoinositide 3-kinase regulatory subunit 4"/>
    <property type="match status" value="1"/>
</dbReference>
<dbReference type="FunFam" id="2.130.10.10:FF:000396">
    <property type="entry name" value="phosphoinositide 3-kinase regulatory subunit 4"/>
    <property type="match status" value="1"/>
</dbReference>
<dbReference type="Gene3D" id="1.25.10.10">
    <property type="entry name" value="Leucine-rich Repeat Variant"/>
    <property type="match status" value="2"/>
</dbReference>
<dbReference type="Gene3D" id="1.10.510.10">
    <property type="entry name" value="Transferase(Phosphotransferase) domain 1"/>
    <property type="match status" value="1"/>
</dbReference>
<dbReference type="Gene3D" id="2.130.10.10">
    <property type="entry name" value="YVTN repeat-like/Quinoprotein amine dehydrogenase"/>
    <property type="match status" value="2"/>
</dbReference>
<dbReference type="InterPro" id="IPR011989">
    <property type="entry name" value="ARM-like"/>
</dbReference>
<dbReference type="InterPro" id="IPR016024">
    <property type="entry name" value="ARM-type_fold"/>
</dbReference>
<dbReference type="InterPro" id="IPR021133">
    <property type="entry name" value="HEAT_type_2"/>
</dbReference>
<dbReference type="InterPro" id="IPR011009">
    <property type="entry name" value="Kinase-like_dom_sf"/>
</dbReference>
<dbReference type="InterPro" id="IPR000719">
    <property type="entry name" value="Prot_kinase_dom"/>
</dbReference>
<dbReference type="InterPro" id="IPR008271">
    <property type="entry name" value="Ser/Thr_kinase_AS"/>
</dbReference>
<dbReference type="InterPro" id="IPR045162">
    <property type="entry name" value="Vps15-like"/>
</dbReference>
<dbReference type="InterPro" id="IPR055231">
    <property type="entry name" value="VPS15-like_hel"/>
</dbReference>
<dbReference type="InterPro" id="IPR015943">
    <property type="entry name" value="WD40/YVTN_repeat-like_dom_sf"/>
</dbReference>
<dbReference type="InterPro" id="IPR036322">
    <property type="entry name" value="WD40_repeat_dom_sf"/>
</dbReference>
<dbReference type="InterPro" id="IPR001680">
    <property type="entry name" value="WD40_rpt"/>
</dbReference>
<dbReference type="PANTHER" id="PTHR17583">
    <property type="entry name" value="PHOSPHOINOSITIDE 3-KINASE REGULATORY SUBUNIT 4"/>
    <property type="match status" value="1"/>
</dbReference>
<dbReference type="PANTHER" id="PTHR17583:SF0">
    <property type="entry name" value="PHOSPHOINOSITIDE 3-KINASE REGULATORY SUBUNIT 4"/>
    <property type="match status" value="1"/>
</dbReference>
<dbReference type="Pfam" id="PF00069">
    <property type="entry name" value="Pkinase"/>
    <property type="match status" value="1"/>
</dbReference>
<dbReference type="Pfam" id="PF22956">
    <property type="entry name" value="VPS15-like_hel"/>
    <property type="match status" value="1"/>
</dbReference>
<dbReference type="Pfam" id="PF00400">
    <property type="entry name" value="WD40"/>
    <property type="match status" value="2"/>
</dbReference>
<dbReference type="SMART" id="SM00220">
    <property type="entry name" value="S_TKc"/>
    <property type="match status" value="1"/>
</dbReference>
<dbReference type="SMART" id="SM00320">
    <property type="entry name" value="WD40"/>
    <property type="match status" value="6"/>
</dbReference>
<dbReference type="SUPFAM" id="SSF48371">
    <property type="entry name" value="ARM repeat"/>
    <property type="match status" value="1"/>
</dbReference>
<dbReference type="SUPFAM" id="SSF56112">
    <property type="entry name" value="Protein kinase-like (PK-like)"/>
    <property type="match status" value="1"/>
</dbReference>
<dbReference type="SUPFAM" id="SSF50978">
    <property type="entry name" value="WD40 repeat-like"/>
    <property type="match status" value="1"/>
</dbReference>
<dbReference type="PROSITE" id="PS50077">
    <property type="entry name" value="HEAT_REPEAT"/>
    <property type="match status" value="1"/>
</dbReference>
<dbReference type="PROSITE" id="PS50011">
    <property type="entry name" value="PROTEIN_KINASE_DOM"/>
    <property type="match status" value="1"/>
</dbReference>
<dbReference type="PROSITE" id="PS00108">
    <property type="entry name" value="PROTEIN_KINASE_ST"/>
    <property type="match status" value="1"/>
</dbReference>
<dbReference type="PROSITE" id="PS00678">
    <property type="entry name" value="WD_REPEATS_1"/>
    <property type="match status" value="2"/>
</dbReference>
<dbReference type="PROSITE" id="PS50082">
    <property type="entry name" value="WD_REPEATS_2"/>
    <property type="match status" value="2"/>
</dbReference>
<dbReference type="PROSITE" id="PS50294">
    <property type="entry name" value="WD_REPEATS_REGION"/>
    <property type="match status" value="2"/>
</dbReference>
<reference key="1">
    <citation type="journal article" date="1997" name="J. Biol. Chem.">
        <title>Characterization of p150, an adaptor protein for the human phosphatidylinositol (PtdIns) 3-kinase. Substrate presentation by phosphatidylinositol transfer protein to the p150.PtdIns 3-kinase complex.</title>
        <authorList>
            <person name="Panaretou C."/>
            <person name="Domin J."/>
            <person name="Cockcroft S."/>
            <person name="Waterfield M.D."/>
        </authorList>
    </citation>
    <scope>NUCLEOTIDE SEQUENCE [MRNA]</scope>
    <scope>PROTEIN SEQUENCE OF 53-63; 333-343; 540-554 AND 786-791</scope>
    <scope>MYRISTOYLATION AT GLY-2</scope>
    <scope>PHOSPHORYLATION</scope>
    <scope>COFACTOR</scope>
    <scope>TISSUE SPECIFICITY</scope>
    <scope>INTERACTION WITH PIK3C3</scope>
</reference>
<reference key="2">
    <citation type="journal article" date="2004" name="Genome Res.">
        <title>The status, quality, and expansion of the NIH full-length cDNA project: the Mammalian Gene Collection (MGC).</title>
        <authorList>
            <consortium name="The MGC Project Team"/>
        </authorList>
    </citation>
    <scope>NUCLEOTIDE SEQUENCE [LARGE SCALE MRNA]</scope>
</reference>
<reference key="3">
    <citation type="journal article" date="2003" name="Traffic">
        <title>Human VPS34 and p150 are Rab7 interacting partners.</title>
        <authorList>
            <person name="Stein M.P."/>
            <person name="Feng Y."/>
            <person name="Cooper K.L."/>
            <person name="Welford A.M."/>
            <person name="Wandinger-Ness A."/>
        </authorList>
    </citation>
    <scope>INTERACTION WITH RAB7A AND PIK3C3/VPS34</scope>
    <scope>SUBCELLULAR LOCATION</scope>
</reference>
<reference key="4">
    <citation type="journal article" date="2008" name="Mol. Cell">
        <title>Kinase-selective enrichment enables quantitative phosphoproteomics of the kinome across the cell cycle.</title>
        <authorList>
            <person name="Daub H."/>
            <person name="Olsen J.V."/>
            <person name="Bairlein M."/>
            <person name="Gnad F."/>
            <person name="Oppermann F.S."/>
            <person name="Korner R."/>
            <person name="Greff Z."/>
            <person name="Keri G."/>
            <person name="Stemmann O."/>
            <person name="Mann M."/>
        </authorList>
    </citation>
    <scope>PHOSPHORYLATION [LARGE SCALE ANALYSIS] AT THR-1316</scope>
    <scope>IDENTIFICATION BY MASS SPECTROMETRY [LARGE SCALE ANALYSIS]</scope>
    <source>
        <tissue>Cervix carcinoma</tissue>
    </source>
</reference>
<reference key="5">
    <citation type="journal article" date="2008" name="Proc. Natl. Acad. Sci. U.S.A.">
        <title>A quantitative atlas of mitotic phosphorylation.</title>
        <authorList>
            <person name="Dephoure N."/>
            <person name="Zhou C."/>
            <person name="Villen J."/>
            <person name="Beausoleil S.A."/>
            <person name="Bakalarski C.E."/>
            <person name="Elledge S.J."/>
            <person name="Gygi S.P."/>
        </authorList>
    </citation>
    <scope>IDENTIFICATION BY MASS SPECTROMETRY [LARGE SCALE ANALYSIS]</scope>
    <source>
        <tissue>Cervix carcinoma</tissue>
    </source>
</reference>
<reference key="6">
    <citation type="journal article" date="2009" name="Mol. Cell. Proteomics">
        <title>Large-scale proteomics analysis of the human kinome.</title>
        <authorList>
            <person name="Oppermann F.S."/>
            <person name="Gnad F."/>
            <person name="Olsen J.V."/>
            <person name="Hornberger R."/>
            <person name="Greff Z."/>
            <person name="Keri G."/>
            <person name="Mann M."/>
            <person name="Daub H."/>
        </authorList>
    </citation>
    <scope>PHOSPHORYLATION [LARGE SCALE ANALYSIS] AT SER-808; SER-853 AND SER-865</scope>
    <scope>IDENTIFICATION BY MASS SPECTROMETRY [LARGE SCALE ANALYSIS]</scope>
</reference>
<reference key="7">
    <citation type="journal article" date="2010" name="Exp. Cell Res.">
        <title>A phosphatidylinositol 3-kinase class III sub-complex containing VPS15, VPS34, Beclin 1, UVRAG and BIF-1 regulates cytokinesis and degradative endocytic traffic.</title>
        <authorList>
            <person name="Thoresen S.B."/>
            <person name="Pedersen N.M."/>
            <person name="Liestol K."/>
            <person name="Stenmark H."/>
        </authorList>
    </citation>
    <scope>FUNCTION</scope>
    <scope>SUBUNIT</scope>
</reference>
<reference key="8">
    <citation type="journal article" date="2009" name="Nat. Cell Biol.">
        <title>Two Beclin 1-binding proteins, Atg14L and Rubicon, reciprocally regulate autophagy at different stages.</title>
        <authorList>
            <person name="Matsunaga K."/>
            <person name="Saitoh T."/>
            <person name="Tabata K."/>
            <person name="Omori H."/>
            <person name="Satoh T."/>
            <person name="Kurotori N."/>
            <person name="Maejima I."/>
            <person name="Shirahama-Noda K."/>
            <person name="Ichimura T."/>
            <person name="Isobe T."/>
            <person name="Akira S."/>
            <person name="Noda T."/>
            <person name="Yoshimori T."/>
        </authorList>
    </citation>
    <scope>INTERACTION WITH BECN1; RUBCN; ATG14; PIK3C3 AND UVRAG</scope>
</reference>
<reference key="9">
    <citation type="journal article" date="2010" name="Sci. Signal.">
        <title>Quantitative phosphoproteomics reveals widespread full phosphorylation site occupancy during mitosis.</title>
        <authorList>
            <person name="Olsen J.V."/>
            <person name="Vermeulen M."/>
            <person name="Santamaria A."/>
            <person name="Kumar C."/>
            <person name="Miller M.L."/>
            <person name="Jensen L.J."/>
            <person name="Gnad F."/>
            <person name="Cox J."/>
            <person name="Jensen T.S."/>
            <person name="Nigg E.A."/>
            <person name="Brunak S."/>
            <person name="Mann M."/>
        </authorList>
    </citation>
    <scope>IDENTIFICATION BY MASS SPECTROMETRY [LARGE SCALE ANALYSIS]</scope>
    <source>
        <tissue>Cervix carcinoma</tissue>
    </source>
</reference>
<reference key="10">
    <citation type="journal article" date="2011" name="BMC Syst. Biol.">
        <title>Initial characterization of the human central proteome.</title>
        <authorList>
            <person name="Burkard T.R."/>
            <person name="Planyavsky M."/>
            <person name="Kaupe I."/>
            <person name="Breitwieser F.P."/>
            <person name="Buerckstuemmer T."/>
            <person name="Bennett K.L."/>
            <person name="Superti-Furga G."/>
            <person name="Colinge J."/>
        </authorList>
    </citation>
    <scope>IDENTIFICATION BY MASS SPECTROMETRY [LARGE SCALE ANALYSIS]</scope>
</reference>
<reference key="11">
    <citation type="journal article" date="2013" name="J. Proteome Res.">
        <title>Toward a comprehensive characterization of a human cancer cell phosphoproteome.</title>
        <authorList>
            <person name="Zhou H."/>
            <person name="Di Palma S."/>
            <person name="Preisinger C."/>
            <person name="Peng M."/>
            <person name="Polat A.N."/>
            <person name="Heck A.J."/>
            <person name="Mohammed S."/>
        </authorList>
    </citation>
    <scope>PHOSPHORYLATION [LARGE SCALE ANALYSIS] AT SER-813</scope>
    <scope>IDENTIFICATION BY MASS SPECTROMETRY [LARGE SCALE ANALYSIS]</scope>
    <source>
        <tissue>Cervix carcinoma</tissue>
        <tissue>Erythroleukemia</tissue>
    </source>
</reference>
<reference key="12">
    <citation type="journal article" date="2013" name="Mol. Cell. Biol.">
        <title>Role of membrane association and Atg14-dependent phosphorylation in beclin-1-mediated autophagy.</title>
        <authorList>
            <person name="Fogel A.I."/>
            <person name="Dlouhy B.J."/>
            <person name="Wang C."/>
            <person name="Ryu S.W."/>
            <person name="Neutzner A."/>
            <person name="Hasson S.A."/>
            <person name="Sideris D.P."/>
            <person name="Abeliovich H."/>
            <person name="Youle R.J."/>
        </authorList>
    </citation>
    <scope>INTERACTION WITH BECN1</scope>
</reference>
<reference key="13">
    <citation type="journal article" date="2014" name="Biochem. J.">
        <title>NRBF2 regulates macroautophagy as a component of Vps34 Complex I.</title>
        <authorList>
            <person name="Cao Y."/>
            <person name="Wang Y."/>
            <person name="Abi Saab W.F."/>
            <person name="Yang F."/>
            <person name="Pessin J.E."/>
            <person name="Backer J.M."/>
        </authorList>
    </citation>
    <scope>INTERACTION WITH NRBF2</scope>
</reference>
<reference key="14">
    <citation type="journal article" date="2014" name="Elife">
        <title>Architecture and dynamics of the autophagic phosphatidylinositol 3-kinase complex.</title>
        <authorList>
            <person name="Baskaran S."/>
            <person name="Carlson L.A."/>
            <person name="Stjepanovic G."/>
            <person name="Young L.N."/>
            <person name="Kim do J."/>
            <person name="Grob P."/>
            <person name="Stanley R.E."/>
            <person name="Nogales E."/>
            <person name="Hurley J.H."/>
        </authorList>
    </citation>
    <scope>RECONSTITUTION OF THE PI3K COMPLEX I</scope>
    <scope>ELECTRON MICROSCOPY OF THE PI3K COMPLEX I</scope>
</reference>
<reference key="15">
    <citation type="journal article" date="2014" name="Nat. Commun.">
        <title>Global profiling of co- and post-translationally N-myristoylated proteomes in human cells.</title>
        <authorList>
            <person name="Thinon E."/>
            <person name="Serwa R.A."/>
            <person name="Broncel M."/>
            <person name="Brannigan J.A."/>
            <person name="Brassat U."/>
            <person name="Wright M.H."/>
            <person name="Heal W.P."/>
            <person name="Wilkinson A.J."/>
            <person name="Mann D.J."/>
            <person name="Tate E.W."/>
        </authorList>
    </citation>
    <scope>MYRISTOYLATION AT GLY-2</scope>
    <scope>CLEAVAGE OF INITIATOR METHIONINE</scope>
    <scope>IDENTIFICATION BY MASS SPECTROMETRY</scope>
</reference>
<reference key="16">
    <citation type="journal article" date="2006" name="Science">
        <title>The consensus coding sequences of human breast and colorectal cancers.</title>
        <authorList>
            <person name="Sjoeblom T."/>
            <person name="Jones S."/>
            <person name="Wood L.D."/>
            <person name="Parsons D.W."/>
            <person name="Lin J."/>
            <person name="Barber T.D."/>
            <person name="Mandelker D."/>
            <person name="Leary R.J."/>
            <person name="Ptak J."/>
            <person name="Silliman N."/>
            <person name="Szabo S."/>
            <person name="Buckhaults P."/>
            <person name="Farrell C."/>
            <person name="Meeh P."/>
            <person name="Markowitz S.D."/>
            <person name="Willis J."/>
            <person name="Dawson D."/>
            <person name="Willson J.K.V."/>
            <person name="Gazdar A.F."/>
            <person name="Hartigan J."/>
            <person name="Wu L."/>
            <person name="Liu C."/>
            <person name="Parmigiani G."/>
            <person name="Park B.H."/>
            <person name="Bachman K.E."/>
            <person name="Papadopoulos N."/>
            <person name="Vogelstein B."/>
            <person name="Kinzler K.W."/>
            <person name="Velculescu V.E."/>
        </authorList>
    </citation>
    <scope>VARIANT [LARGE SCALE ANALYSIS] GLN-936</scope>
</reference>
<reference key="17">
    <citation type="journal article" date="2007" name="Nature">
        <title>Patterns of somatic mutation in human cancer genomes.</title>
        <authorList>
            <person name="Greenman C."/>
            <person name="Stephens P."/>
            <person name="Smith R."/>
            <person name="Dalgliesh G.L."/>
            <person name="Hunter C."/>
            <person name="Bignell G."/>
            <person name="Davies H."/>
            <person name="Teague J."/>
            <person name="Butler A."/>
            <person name="Stevens C."/>
            <person name="Edkins S."/>
            <person name="O'Meara S."/>
            <person name="Vastrik I."/>
            <person name="Schmidt E.E."/>
            <person name="Avis T."/>
            <person name="Barthorpe S."/>
            <person name="Bhamra G."/>
            <person name="Buck G."/>
            <person name="Choudhury B."/>
            <person name="Clements J."/>
            <person name="Cole J."/>
            <person name="Dicks E."/>
            <person name="Forbes S."/>
            <person name="Gray K."/>
            <person name="Halliday K."/>
            <person name="Harrison R."/>
            <person name="Hills K."/>
            <person name="Hinton J."/>
            <person name="Jenkinson A."/>
            <person name="Jones D."/>
            <person name="Menzies A."/>
            <person name="Mironenko T."/>
            <person name="Perry J."/>
            <person name="Raine K."/>
            <person name="Richardson D."/>
            <person name="Shepherd R."/>
            <person name="Small A."/>
            <person name="Tofts C."/>
            <person name="Varian J."/>
            <person name="Webb T."/>
            <person name="West S."/>
            <person name="Widaa S."/>
            <person name="Yates A."/>
            <person name="Cahill D.P."/>
            <person name="Louis D.N."/>
            <person name="Goldstraw P."/>
            <person name="Nicholson A.G."/>
            <person name="Brasseur F."/>
            <person name="Looijenga L."/>
            <person name="Weber B.L."/>
            <person name="Chiew Y.-E."/>
            <person name="DeFazio A."/>
            <person name="Greaves M.F."/>
            <person name="Green A.R."/>
            <person name="Campbell P."/>
            <person name="Birney E."/>
            <person name="Easton D.F."/>
            <person name="Chenevix-Trench G."/>
            <person name="Tan M.-H."/>
            <person name="Khoo S.K."/>
            <person name="Teh B.T."/>
            <person name="Yuen S.T."/>
            <person name="Leung S.Y."/>
            <person name="Wooster R."/>
            <person name="Futreal P.A."/>
            <person name="Stratton M.R."/>
        </authorList>
    </citation>
    <scope>VARIANTS [LARGE SCALE ANALYSIS] LEU-273; HIS-342; TRP-347; ILE-388; ASN-393; VAL-699 AND VAL-1043</scope>
</reference>
<organism>
    <name type="scientific">Homo sapiens</name>
    <name type="common">Human</name>
    <dbReference type="NCBI Taxonomy" id="9606"/>
    <lineage>
        <taxon>Eukaryota</taxon>
        <taxon>Metazoa</taxon>
        <taxon>Chordata</taxon>
        <taxon>Craniata</taxon>
        <taxon>Vertebrata</taxon>
        <taxon>Euteleostomi</taxon>
        <taxon>Mammalia</taxon>
        <taxon>Eutheria</taxon>
        <taxon>Euarchontoglires</taxon>
        <taxon>Primates</taxon>
        <taxon>Haplorrhini</taxon>
        <taxon>Catarrhini</taxon>
        <taxon>Hominidae</taxon>
        <taxon>Homo</taxon>
    </lineage>
</organism>
<proteinExistence type="evidence at protein level"/>
<accession>Q99570</accession>
<accession>Q2TBF4</accession>
<sequence>MGNQLAGIAPSQILSVESYFSDIHDFEYDKSLGSTRFFKVARAKHREGLVVVKVFAIQDPTLPLTSYKQELEELKIRLNSAQNCLPFQKASEKASEKAAMLFRQYVRDNLYDRISTRPFLNNIEKRWIAFQILTAVDQAHKSGVRHGDIKTENVMVTSWNWVLLTDFASFKPTYLPEDNPADFNYFFDTSRRRTCYIAPERFVDGGMFATELEYMRDPSTPLVDLNSNQRTRGELKRAMDIFSAGCVIAELFTEGVPLFDLSQLLAYRNGHFFPEQVLNKIEDHSIRELVTQMIHREPDKRLEAEDYLKQQRGNAFPEIFYTFLQPYMAQFAKETFLSADERILVIRKDLGNIIHNLCGHDLPEKAEGEPKENGLVILVSVITSCLQTLKYCDSKLAALELILHLAPRLSVEILLDRITPYLLHFSNDSVPRVRAEALRTLTKVLALVKEVPRNDINIYPEYILPGIAHLAQDDATIVRLAYAENIALLAETALRFLELVQLKNLNMENDPNNEEIDEVTHPNGNYDTELQALHEMVQQKVVTLLSDPENIVKQTLMENGITRLCVFFGRQKANDVLLSHMITFLNDKNDWHLRGAFFDSIVGVAAYVGWQSSSILKPLLQQGLSDAEEFVIVKALYALTCMCQLGLLQKPHVYEFASDIAPFLCHPNLWIRYGAVGFITVVARQISTADVYCKLMPYLDPYITQPIIQIERKLVLLSVLKEPVSRSIFDYALRSKDITSLFRHLHMRQKKRNGSLPDCPPPEDPAIAQLLKKLLSQGMTEEEEDKLLALKDFMMKSNKAKANIVDQSHLHDSSQKGVIDLAALGITGRQVDLVKTKQEPDDKRARKHVKQDSNVNEEWKSMFGSLDPPNMPQALPKGSDQEVIQTGKPPRSESSAGICVPLSTSSQVPEVTTVQNKKPVIPVLSSTILPSTYQIRITTCKTELQQLIQQKREQCNAERIAKQMMENAEWESKPPPPGWRPKGLLVAHLHEHKSAVNRIRVSDEHSLFATCSNDGTVKIWNSQKMEGKTTTTRSILTYSRIGGRVKTLTFCQGSHYLAIASDNGAVQLLGIEASKLPKSPKIHPLQSRILDQKEDGCVVDMHHFNSGAQSVLAYATVNGSLVGWDLRSSSNAWTLKHDLKSGLITSFAVDIHQCWLCIGTSSGTMACWDMRFQLPISSHCHPSRARIRRLSMHPLYQSWVIAAVQGNNEVSMWDMETGDRRFTLWASSAPPLSELQPSPHSVHGIYCSPADGNPILLTAGSDMKIRFWDLAYPERSYVVAGSTSSPSVSYYRKIIEGTEVVQEIQNKQKVGPSDDTPRRGPESLPVGHHDIITDVATFQTTQGFIVTASRDGIVKVWK</sequence>
<comment type="function">
    <text evidence="9">Regulatory subunit of the PI3K complex that mediates formation of phosphatidylinositol 3-phosphate; different complex forms are believed to play a role in multiple membrane trafficking pathways: PI3KC3-C1 is involved in initiation of autophagosomes and PI3KC3-C2 in maturation of autophagosomes and endocytosis. Involved in regulation of degradative endocytic trafficking and cytokinesis, probably in the context of PI3KC3-C2 (PubMed:20643123).</text>
</comment>
<comment type="catalytic activity">
    <reaction>
        <text>L-seryl-[protein] + ATP = O-phospho-L-seryl-[protein] + ADP + H(+)</text>
        <dbReference type="Rhea" id="RHEA:17989"/>
        <dbReference type="Rhea" id="RHEA-COMP:9863"/>
        <dbReference type="Rhea" id="RHEA-COMP:11604"/>
        <dbReference type="ChEBI" id="CHEBI:15378"/>
        <dbReference type="ChEBI" id="CHEBI:29999"/>
        <dbReference type="ChEBI" id="CHEBI:30616"/>
        <dbReference type="ChEBI" id="CHEBI:83421"/>
        <dbReference type="ChEBI" id="CHEBI:456216"/>
        <dbReference type="EC" id="2.7.11.1"/>
    </reaction>
</comment>
<comment type="catalytic activity">
    <reaction>
        <text>L-threonyl-[protein] + ATP = O-phospho-L-threonyl-[protein] + ADP + H(+)</text>
        <dbReference type="Rhea" id="RHEA:46608"/>
        <dbReference type="Rhea" id="RHEA-COMP:11060"/>
        <dbReference type="Rhea" id="RHEA-COMP:11605"/>
        <dbReference type="ChEBI" id="CHEBI:15378"/>
        <dbReference type="ChEBI" id="CHEBI:30013"/>
        <dbReference type="ChEBI" id="CHEBI:30616"/>
        <dbReference type="ChEBI" id="CHEBI:61977"/>
        <dbReference type="ChEBI" id="CHEBI:456216"/>
        <dbReference type="EC" id="2.7.11.1"/>
    </reaction>
</comment>
<comment type="cofactor">
    <cofactor evidence="14">
        <name>Mn(2+)</name>
        <dbReference type="ChEBI" id="CHEBI:29035"/>
    </cofactor>
</comment>
<comment type="subunit">
    <text evidence="1 5 8 9 10 11 13 14">Component of the PI3K (PI3KC3/PI3K-III/class III phosphatidylinositol 3-kinase) complex the core of which is composed of the catalytic subunit PIK3C3, the regulatory subunit PIK3R4 and BECN1 associating with additional regulatory/auxiliary subunits to form alternative complex forms. Alternative complex forms containing a fourth regulatory subunit in a mutually exclusive manner are PI3K complex I (PI3KC3-C1) containing ATG14, and PI3K complex II (PI3KC3-C2) containing UVRAG (PubMed:19270696, PubMed:23878393, PubMed:25490155, PubMed:8999962). PI3KC3-C1 displays a V-shaped architecture with PIK3R4 serving as a bridge between PIK3C3 and the ATG14:BECN1 subcomplex (PubMed:25490155). Both, PI3KC3-C1 and PI3KC3-C2, can associate with further regulatory subunits, such as RUBCN, SH3GLB1/Bif-1, AMBRA1 and NRBF2 (PubMed:19270696, PubMed:20643123, PubMed:24785657). PI3KC3-C1 probably associates with PIK3CB (By similarity). Interacts with RAB7A in the presence of PIK3C3/VPS34 (PubMed:14617358). Interacts with NRBF2 (PubMed:24785657). Interacts with ARMC3 (By similarity).</text>
</comment>
<comment type="interaction">
    <interactant intactId="EBI-1046979">
        <id>Q99570</id>
    </interactant>
    <interactant intactId="EBI-10242151">
        <id>Q53EP0-3</id>
        <label>FNDC3B</label>
    </interactant>
    <organismsDiffer>false</organismsDiffer>
    <experiments>3</experiments>
</comment>
<comment type="interaction">
    <interactant intactId="EBI-1046979">
        <id>Q99570</id>
    </interactant>
    <interactant intactId="EBI-2362014">
        <id>Q96F24</id>
        <label>NRBF2</label>
    </interactant>
    <organismsDiffer>false</organismsDiffer>
    <experiments>15</experiments>
</comment>
<comment type="subcellular location">
    <subcellularLocation>
        <location evidence="5">Late endosome</location>
    </subcellularLocation>
    <subcellularLocation>
        <location evidence="16">Cytoplasmic vesicle</location>
        <location evidence="16">Autophagosome</location>
    </subcellularLocation>
    <subcellularLocation>
        <location evidence="16">Membrane</location>
        <topology evidence="16">Lipid-anchor</topology>
    </subcellularLocation>
    <text evidence="1 16">As component of the PI3K complex I localized to pre-autophagosome structures. As component of the PI3K complex II localized predominantly to endosomes. Localizes also to discrete punctae along the ciliary axoneme (By similarity).</text>
</comment>
<comment type="tissue specificity">
    <text evidence="14">Ubiquitously expressed.</text>
</comment>
<comment type="PTM">
    <text evidence="14">Myristoylated.</text>
</comment>
<comment type="PTM">
    <text evidence="14">Probably autophosphorylated.</text>
</comment>
<comment type="similarity">
    <text evidence="2">Belongs to the protein kinase superfamily. Ser/Thr protein kinase family.</text>
</comment>
<evidence type="ECO:0000250" key="1">
    <source>
        <dbReference type="UniProtKB" id="Q8VD65"/>
    </source>
</evidence>
<evidence type="ECO:0000255" key="2">
    <source>
        <dbReference type="PROSITE-ProRule" id="PRU00159"/>
    </source>
</evidence>
<evidence type="ECO:0000255" key="3">
    <source>
        <dbReference type="PROSITE-ProRule" id="PRU10027"/>
    </source>
</evidence>
<evidence type="ECO:0000256" key="4">
    <source>
        <dbReference type="SAM" id="MobiDB-lite"/>
    </source>
</evidence>
<evidence type="ECO:0000269" key="5">
    <source>
    </source>
</evidence>
<evidence type="ECO:0000269" key="6">
    <source>
    </source>
</evidence>
<evidence type="ECO:0000269" key="7">
    <source>
    </source>
</evidence>
<evidence type="ECO:0000269" key="8">
    <source>
    </source>
</evidence>
<evidence type="ECO:0000269" key="9">
    <source>
    </source>
</evidence>
<evidence type="ECO:0000269" key="10">
    <source>
    </source>
</evidence>
<evidence type="ECO:0000269" key="11">
    <source>
    </source>
</evidence>
<evidence type="ECO:0000269" key="12">
    <source>
    </source>
</evidence>
<evidence type="ECO:0000269" key="13">
    <source>
    </source>
</evidence>
<evidence type="ECO:0000269" key="14">
    <source>
    </source>
</evidence>
<evidence type="ECO:0000303" key="15">
    <source>
    </source>
</evidence>
<evidence type="ECO:0000305" key="16"/>
<evidence type="ECO:0007744" key="17">
    <source>
    </source>
</evidence>
<evidence type="ECO:0007744" key="18">
    <source>
    </source>
</evidence>
<evidence type="ECO:0007744" key="19">
    <source>
    </source>
</evidence>
<keyword id="KW-0002">3D-structure</keyword>
<keyword id="KW-0067">ATP-binding</keyword>
<keyword id="KW-0968">Cytoplasmic vesicle</keyword>
<keyword id="KW-0903">Direct protein sequencing</keyword>
<keyword id="KW-0967">Endosome</keyword>
<keyword id="KW-0418">Kinase</keyword>
<keyword id="KW-0449">Lipoprotein</keyword>
<keyword id="KW-0472">Membrane</keyword>
<keyword id="KW-0519">Myristate</keyword>
<keyword id="KW-0547">Nucleotide-binding</keyword>
<keyword id="KW-0597">Phosphoprotein</keyword>
<keyword id="KW-1267">Proteomics identification</keyword>
<keyword id="KW-1185">Reference proteome</keyword>
<keyword id="KW-0677">Repeat</keyword>
<keyword id="KW-0723">Serine/threonine-protein kinase</keyword>
<keyword id="KW-0808">Transferase</keyword>
<keyword id="KW-0853">WD repeat</keyword>
<gene>
    <name type="primary">PIK3R4</name>
    <name evidence="15" type="synonym">VPS15</name>
</gene>